<dbReference type="EMBL" id="AY495338">
    <property type="protein sequence ID" value="AAS91791.1"/>
    <property type="molecule type" value="mRNA"/>
</dbReference>
<dbReference type="EMBL" id="BC085842">
    <property type="protein sequence ID" value="AAH85842.1"/>
    <property type="molecule type" value="mRNA"/>
</dbReference>
<dbReference type="RefSeq" id="NP_001001510.1">
    <property type="nucleotide sequence ID" value="NM_001001510.1"/>
</dbReference>
<dbReference type="SMR" id="Q6JEL3"/>
<dbReference type="FunCoup" id="Q6JEL3">
    <property type="interactions" value="31"/>
</dbReference>
<dbReference type="STRING" id="10116.ENSRNOP00000022687"/>
<dbReference type="iPTMnet" id="Q6JEL3"/>
<dbReference type="PhosphoSitePlus" id="Q6JEL3"/>
<dbReference type="PaxDb" id="10116-ENSRNOP00000022687"/>
<dbReference type="Ensembl" id="ENSRNOT00000022687.5">
    <property type="protein sequence ID" value="ENSRNOP00000022687.2"/>
    <property type="gene ID" value="ENSRNOG00000016749.5"/>
</dbReference>
<dbReference type="GeneID" id="303533"/>
<dbReference type="KEGG" id="rno:303533"/>
<dbReference type="UCSC" id="RGD:1303290">
    <property type="organism name" value="rat"/>
</dbReference>
<dbReference type="AGR" id="RGD:1303290"/>
<dbReference type="CTD" id="317719"/>
<dbReference type="RGD" id="1303290">
    <property type="gene designation" value="Klhl10"/>
</dbReference>
<dbReference type="eggNOG" id="KOG4441">
    <property type="taxonomic scope" value="Eukaryota"/>
</dbReference>
<dbReference type="GeneTree" id="ENSGT00940000154664"/>
<dbReference type="HOGENOM" id="CLU_004253_14_1_1"/>
<dbReference type="InParanoid" id="Q6JEL3"/>
<dbReference type="OMA" id="YKTNQWS"/>
<dbReference type="OrthoDB" id="191037at2759"/>
<dbReference type="PhylomeDB" id="Q6JEL3"/>
<dbReference type="TreeFam" id="TF329218"/>
<dbReference type="UniPathway" id="UPA00143"/>
<dbReference type="PRO" id="PR:Q6JEL3"/>
<dbReference type="Proteomes" id="UP000002494">
    <property type="component" value="Chromosome 10"/>
</dbReference>
<dbReference type="Bgee" id="ENSRNOG00000016749">
    <property type="expression patterns" value="Expressed in testis and 2 other cell types or tissues"/>
</dbReference>
<dbReference type="GO" id="GO:0031463">
    <property type="term" value="C:Cul3-RING ubiquitin ligase complex"/>
    <property type="evidence" value="ECO:0000318"/>
    <property type="project" value="GO_Central"/>
</dbReference>
<dbReference type="GO" id="GO:0005737">
    <property type="term" value="C:cytoplasm"/>
    <property type="evidence" value="ECO:0000266"/>
    <property type="project" value="RGD"/>
</dbReference>
<dbReference type="GO" id="GO:1990756">
    <property type="term" value="F:ubiquitin-like ligase-substrate adaptor activity"/>
    <property type="evidence" value="ECO:0000318"/>
    <property type="project" value="GO_Central"/>
</dbReference>
<dbReference type="GO" id="GO:0000902">
    <property type="term" value="P:cell morphogenesis"/>
    <property type="evidence" value="ECO:0000266"/>
    <property type="project" value="RGD"/>
</dbReference>
<dbReference type="GO" id="GO:0009566">
    <property type="term" value="P:fertilization"/>
    <property type="evidence" value="ECO:0000266"/>
    <property type="project" value="RGD"/>
</dbReference>
<dbReference type="GO" id="GO:0048873">
    <property type="term" value="P:homeostasis of number of cells within a tissue"/>
    <property type="evidence" value="ECO:0000266"/>
    <property type="project" value="RGD"/>
</dbReference>
<dbReference type="GO" id="GO:0048808">
    <property type="term" value="P:male genitalia morphogenesis"/>
    <property type="evidence" value="ECO:0000266"/>
    <property type="project" value="RGD"/>
</dbReference>
<dbReference type="GO" id="GO:0008584">
    <property type="term" value="P:male gonad development"/>
    <property type="evidence" value="ECO:0000266"/>
    <property type="project" value="RGD"/>
</dbReference>
<dbReference type="GO" id="GO:0043161">
    <property type="term" value="P:proteasome-mediated ubiquitin-dependent protein catabolic process"/>
    <property type="evidence" value="ECO:0000318"/>
    <property type="project" value="GO_Central"/>
</dbReference>
<dbReference type="GO" id="GO:0016567">
    <property type="term" value="P:protein ubiquitination"/>
    <property type="evidence" value="ECO:0007669"/>
    <property type="project" value="UniProtKB-UniPathway"/>
</dbReference>
<dbReference type="GO" id="GO:0007286">
    <property type="term" value="P:spermatid development"/>
    <property type="evidence" value="ECO:0000266"/>
    <property type="project" value="RGD"/>
</dbReference>
<dbReference type="CDD" id="cd18450">
    <property type="entry name" value="BACK_KLHL10"/>
    <property type="match status" value="1"/>
</dbReference>
<dbReference type="CDD" id="cd18240">
    <property type="entry name" value="BTB_POZ_KLHL10"/>
    <property type="match status" value="1"/>
</dbReference>
<dbReference type="FunFam" id="1.25.40.420:FF:000001">
    <property type="entry name" value="Kelch-like family member 12"/>
    <property type="match status" value="1"/>
</dbReference>
<dbReference type="FunFam" id="3.30.710.10:FF:000101">
    <property type="entry name" value="kelch-like protein 10 isoform X1"/>
    <property type="match status" value="1"/>
</dbReference>
<dbReference type="FunFam" id="2.120.10.80:FF:000041">
    <property type="entry name" value="kelch-like protein 10 isoform X2"/>
    <property type="match status" value="1"/>
</dbReference>
<dbReference type="Gene3D" id="1.25.40.420">
    <property type="match status" value="1"/>
</dbReference>
<dbReference type="Gene3D" id="2.120.10.80">
    <property type="entry name" value="Kelch-type beta propeller"/>
    <property type="match status" value="1"/>
</dbReference>
<dbReference type="Gene3D" id="3.30.710.10">
    <property type="entry name" value="Potassium Channel Kv1.1, Chain A"/>
    <property type="match status" value="1"/>
</dbReference>
<dbReference type="InterPro" id="IPR011705">
    <property type="entry name" value="BACK"/>
</dbReference>
<dbReference type="InterPro" id="IPR056737">
    <property type="entry name" value="Beta-prop_ATRN-MKLN-like"/>
</dbReference>
<dbReference type="InterPro" id="IPR017096">
    <property type="entry name" value="BTB-kelch_protein"/>
</dbReference>
<dbReference type="InterPro" id="IPR000210">
    <property type="entry name" value="BTB/POZ_dom"/>
</dbReference>
<dbReference type="InterPro" id="IPR015915">
    <property type="entry name" value="Kelch-typ_b-propeller"/>
</dbReference>
<dbReference type="InterPro" id="IPR006652">
    <property type="entry name" value="Kelch_1"/>
</dbReference>
<dbReference type="InterPro" id="IPR030608">
    <property type="entry name" value="KLHL10_BTB/POZ"/>
</dbReference>
<dbReference type="InterPro" id="IPR011333">
    <property type="entry name" value="SKP1/BTB/POZ_sf"/>
</dbReference>
<dbReference type="PANTHER" id="PTHR45632:SF17">
    <property type="entry name" value="KELCH-LIKE PROTEIN 31"/>
    <property type="match status" value="1"/>
</dbReference>
<dbReference type="PANTHER" id="PTHR45632">
    <property type="entry name" value="LD33804P"/>
    <property type="match status" value="1"/>
</dbReference>
<dbReference type="Pfam" id="PF07707">
    <property type="entry name" value="BACK"/>
    <property type="match status" value="1"/>
</dbReference>
<dbReference type="Pfam" id="PF24981">
    <property type="entry name" value="Beta-prop_ATRN-LZTR1"/>
    <property type="match status" value="1"/>
</dbReference>
<dbReference type="Pfam" id="PF00651">
    <property type="entry name" value="BTB"/>
    <property type="match status" value="1"/>
</dbReference>
<dbReference type="Pfam" id="PF01344">
    <property type="entry name" value="Kelch_1"/>
    <property type="match status" value="1"/>
</dbReference>
<dbReference type="PIRSF" id="PIRSF037037">
    <property type="entry name" value="Kelch-like_protein_gigaxonin"/>
    <property type="match status" value="1"/>
</dbReference>
<dbReference type="PRINTS" id="PR00501">
    <property type="entry name" value="KELCHREPEAT"/>
</dbReference>
<dbReference type="SMART" id="SM00875">
    <property type="entry name" value="BACK"/>
    <property type="match status" value="1"/>
</dbReference>
<dbReference type="SMART" id="SM00225">
    <property type="entry name" value="BTB"/>
    <property type="match status" value="1"/>
</dbReference>
<dbReference type="SMART" id="SM00612">
    <property type="entry name" value="Kelch"/>
    <property type="match status" value="6"/>
</dbReference>
<dbReference type="SUPFAM" id="SSF117281">
    <property type="entry name" value="Kelch motif"/>
    <property type="match status" value="1"/>
</dbReference>
<dbReference type="SUPFAM" id="SSF54695">
    <property type="entry name" value="POZ domain"/>
    <property type="match status" value="1"/>
</dbReference>
<dbReference type="PROSITE" id="PS50097">
    <property type="entry name" value="BTB"/>
    <property type="match status" value="1"/>
</dbReference>
<evidence type="ECO:0000250" key="1"/>
<evidence type="ECO:0000255" key="2">
    <source>
        <dbReference type="PROSITE-ProRule" id="PRU00037"/>
    </source>
</evidence>
<evidence type="ECO:0007744" key="3">
    <source>
    </source>
</evidence>
<protein>
    <recommendedName>
        <fullName>Kelch-like protein 10</fullName>
    </recommendedName>
</protein>
<feature type="chain" id="PRO_0000119114" description="Kelch-like protein 10">
    <location>
        <begin position="1"/>
        <end position="608"/>
    </location>
</feature>
<feature type="domain" description="BTB" evidence="2">
    <location>
        <begin position="39"/>
        <end position="106"/>
    </location>
</feature>
<feature type="repeat" description="Kelch 1">
    <location>
        <begin position="292"/>
        <end position="339"/>
    </location>
</feature>
<feature type="repeat" description="Kelch 2">
    <location>
        <begin position="340"/>
        <end position="386"/>
    </location>
</feature>
<feature type="repeat" description="Kelch 3">
    <location>
        <begin position="388"/>
        <end position="433"/>
    </location>
</feature>
<feature type="repeat" description="Kelch 4">
    <location>
        <begin position="434"/>
        <end position="480"/>
    </location>
</feature>
<feature type="repeat" description="Kelch 5">
    <location>
        <begin position="481"/>
        <end position="527"/>
    </location>
</feature>
<feature type="repeat" description="Kelch 6">
    <location>
        <begin position="529"/>
        <end position="574"/>
    </location>
</feature>
<feature type="modified residue" description="Phosphoserine" evidence="3">
    <location>
        <position position="501"/>
    </location>
</feature>
<gene>
    <name type="primary">Klhl10</name>
</gene>
<name>KLH10_RAT</name>
<keyword id="KW-0963">Cytoplasm</keyword>
<keyword id="KW-0221">Differentiation</keyword>
<keyword id="KW-0880">Kelch repeat</keyword>
<keyword id="KW-0597">Phosphoprotein</keyword>
<keyword id="KW-1185">Reference proteome</keyword>
<keyword id="KW-0677">Repeat</keyword>
<keyword id="KW-0744">Spermatogenesis</keyword>
<keyword id="KW-0833">Ubl conjugation pathway</keyword>
<reference key="1">
    <citation type="journal article" date="2004" name="Proc. Natl. Acad. Sci. U.S.A.">
        <title>Haploinsufficiency of kelch-like protein homolog 10 causes infertility in male mice.</title>
        <authorList>
            <person name="Yan W."/>
            <person name="Ma L."/>
            <person name="Burns K.H."/>
            <person name="Matzuk M.M."/>
        </authorList>
    </citation>
    <scope>NUCLEOTIDE SEQUENCE [MRNA]</scope>
    <source>
        <strain>Sprague-Dawley</strain>
        <tissue>Testis</tissue>
    </source>
</reference>
<reference key="2">
    <citation type="journal article" date="2004" name="Genome Res.">
        <title>The status, quality, and expansion of the NIH full-length cDNA project: the Mammalian Gene Collection (MGC).</title>
        <authorList>
            <consortium name="The MGC Project Team"/>
        </authorList>
    </citation>
    <scope>NUCLEOTIDE SEQUENCE [LARGE SCALE MRNA]</scope>
    <source>
        <tissue>Testis</tissue>
    </source>
</reference>
<reference key="3">
    <citation type="journal article" date="2012" name="Nat. Commun.">
        <title>Quantitative maps of protein phosphorylation sites across 14 different rat organs and tissues.</title>
        <authorList>
            <person name="Lundby A."/>
            <person name="Secher A."/>
            <person name="Lage K."/>
            <person name="Nordsborg N.B."/>
            <person name="Dmytriyev A."/>
            <person name="Lundby C."/>
            <person name="Olsen J.V."/>
        </authorList>
    </citation>
    <scope>PHOSPHORYLATION [LARGE SCALE ANALYSIS] AT SER-501</scope>
    <scope>IDENTIFICATION BY MASS SPECTROMETRY [LARGE SCALE ANALYSIS]</scope>
</reference>
<organism>
    <name type="scientific">Rattus norvegicus</name>
    <name type="common">Rat</name>
    <dbReference type="NCBI Taxonomy" id="10116"/>
    <lineage>
        <taxon>Eukaryota</taxon>
        <taxon>Metazoa</taxon>
        <taxon>Chordata</taxon>
        <taxon>Craniata</taxon>
        <taxon>Vertebrata</taxon>
        <taxon>Euteleostomi</taxon>
        <taxon>Mammalia</taxon>
        <taxon>Eutheria</taxon>
        <taxon>Euarchontoglires</taxon>
        <taxon>Glires</taxon>
        <taxon>Rodentia</taxon>
        <taxon>Myomorpha</taxon>
        <taxon>Muroidea</taxon>
        <taxon>Muridae</taxon>
        <taxon>Murinae</taxon>
        <taxon>Rattus</taxon>
    </lineage>
</organism>
<comment type="function">
    <text>May be a substrate-specific adapter of a CUL3-based E3 ubiquitin-protein ligase complex which mediates the ubiquitination and subsequent proteasomal degradation of target proteins during spermatogenesis.</text>
</comment>
<comment type="pathway">
    <text>Protein modification; protein ubiquitination.</text>
</comment>
<comment type="subunit">
    <text evidence="1">Self-associates. Interacts with CUL3; indicative for the participation in an E3 ubiquitin ligase complex (By similarity).</text>
</comment>
<comment type="subcellular location">
    <subcellularLocation>
        <location evidence="1">Cytoplasm</location>
    </subcellularLocation>
</comment>
<sequence>MEMESSAASTRFHQPHMERKMSAMTCEIFNELRLEGKLCDVVIKVNGFEFNAHKNILCSCSSYFRALFTSGWNNTEKKVYNIPGISPDMMKLIIEYAYTRTVPITPDNVEKLLAAADQFNIMGIVRGCCEFLKSELCLDNCIGICKFTDYYYCPELRQKAYMFILHNFEEMVKVSAEFLELSVTELKDIIEKDELNVKQEDAVFEAILKWISHDPQNRKQHISVLLPKVRLALMHAEYFMNNVKMNDYVKDSEECKPVIINALKAMYDLNMNGPSNSDFTNPLTRPRLPYAILFAIGGWSGGSPTNAIEAYDARADRWVNVTCEEESPRAYHGAAYLKGYVYIIGGFDSVDYFNSVKRFDPVKKTWHQVAPMHSRRCYVSVTVLSNFIYAMGGFDGYVRLNTAERYEPETNQWTLIAPMHEQRSDASATTLYGKVYICGGFNGNECLFTAEVYNTESNQWTVIAPMRSRRSGIGVIAYGEHVYAVGGFDGANRLRSAEAYSPVANTWRTIPTMFNPRSNFGIEVVDDLLFVVGGFNGFTTTFNVECYDEKTDEWYDAHDMSIYRSALSCCVVPGLANVGEYAARRDNFTGLALRDEVKYSASTSTLPV</sequence>
<proteinExistence type="evidence at protein level"/>
<accession>Q6JEL3</accession>